<feature type="chain" id="PRO_0000199416" description="Formate--tetrahydrofolate ligase">
    <location>
        <begin position="1"/>
        <end position="536"/>
    </location>
</feature>
<feature type="binding site" evidence="1">
    <location>
        <begin position="51"/>
        <end position="58"/>
    </location>
    <ligand>
        <name>ATP</name>
        <dbReference type="ChEBI" id="CHEBI:30616"/>
    </ligand>
</feature>
<keyword id="KW-0067">ATP-binding</keyword>
<keyword id="KW-0436">Ligase</keyword>
<keyword id="KW-0547">Nucleotide-binding</keyword>
<keyword id="KW-0554">One-carbon metabolism</keyword>
<evidence type="ECO:0000255" key="1">
    <source>
        <dbReference type="HAMAP-Rule" id="MF_01543"/>
    </source>
</evidence>
<proteinExistence type="inferred from homology"/>
<accession>Q97CL3</accession>
<sequence length="536" mass="57913">MRDIEEILHEMGLSKDDYELYGRYMAKLSLNLQEVNKKKAKLILVTAMTPTAAGEGKTTTTIGLGQAFKKLGKNVAIAIREPSLGPCFGIKGGATGGGKSKVEPSDRINLLFTGDFPAISAAHNLLSAMINNHIYHGNELNLDPKRITFPRTIDMNDRSLRSIVVGVGPRDMGAIANDNFVITPASEVMAITGLSLNYKDLKEKLSRILAGFTVKNKPVFAADLKAEGSMAALLRDALKPNLVQTTEGVPAFVHTGPFGNIAHGTSSIVADRIAMNLFDYVITEAGFGSDLGAEKFFNIVSRIGNLPINAVVLVATIRALKLHGGSKKQGEDVEAVKEGSKNLLRHVANIRKFGVEPVVALNKFPTDTENEIMAIGEILDSHGIKWALSEVFEKGGEGGIELANKVLSSIGDYQIKRTYEVREDLKTKIEKIAVNVYGADGVIFEKKALNDLKKAEEIMNDPYVCMAKTQYSFSDDASLLNDPHGFKVRVQSVNISSGAGFVVPILGEIMTMPGLPKRPAAENIDLAEDGEITGLF</sequence>
<name>FTHS_THEVO</name>
<protein>
    <recommendedName>
        <fullName evidence="1">Formate--tetrahydrofolate ligase</fullName>
        <ecNumber evidence="1">6.3.4.3</ecNumber>
    </recommendedName>
    <alternativeName>
        <fullName evidence="1">Formyltetrahydrofolate synthetase</fullName>
        <shortName evidence="1">FHS</shortName>
        <shortName evidence="1">FTHFS</shortName>
    </alternativeName>
</protein>
<comment type="catalytic activity">
    <reaction evidence="1">
        <text>(6S)-5,6,7,8-tetrahydrofolate + formate + ATP = (6R)-10-formyltetrahydrofolate + ADP + phosphate</text>
        <dbReference type="Rhea" id="RHEA:20221"/>
        <dbReference type="ChEBI" id="CHEBI:15740"/>
        <dbReference type="ChEBI" id="CHEBI:30616"/>
        <dbReference type="ChEBI" id="CHEBI:43474"/>
        <dbReference type="ChEBI" id="CHEBI:57453"/>
        <dbReference type="ChEBI" id="CHEBI:195366"/>
        <dbReference type="ChEBI" id="CHEBI:456216"/>
        <dbReference type="EC" id="6.3.4.3"/>
    </reaction>
</comment>
<comment type="pathway">
    <text evidence="1">One-carbon metabolism; tetrahydrofolate interconversion.</text>
</comment>
<comment type="similarity">
    <text evidence="1">Belongs to the formate--tetrahydrofolate ligase family.</text>
</comment>
<reference key="1">
    <citation type="journal article" date="2000" name="Proc. Natl. Acad. Sci. U.S.A.">
        <title>Archaeal adaptation to higher temperatures revealed by genomic sequence of Thermoplasma volcanium.</title>
        <authorList>
            <person name="Kawashima T."/>
            <person name="Amano N."/>
            <person name="Koike H."/>
            <person name="Makino S."/>
            <person name="Higuchi S."/>
            <person name="Kawashima-Ohya Y."/>
            <person name="Watanabe K."/>
            <person name="Yamazaki M."/>
            <person name="Kanehori K."/>
            <person name="Kawamoto T."/>
            <person name="Nunoshiba T."/>
            <person name="Yamamoto Y."/>
            <person name="Aramaki H."/>
            <person name="Makino K."/>
            <person name="Suzuki M."/>
        </authorList>
    </citation>
    <scope>NUCLEOTIDE SEQUENCE [LARGE SCALE GENOMIC DNA]</scope>
    <source>
        <strain>ATCC 51530 / DSM 4299 / JCM 9571 / NBRC 15438 / GSS1</strain>
    </source>
</reference>
<dbReference type="EC" id="6.3.4.3" evidence="1"/>
<dbReference type="EMBL" id="BA000011">
    <property type="protein sequence ID" value="BAB59230.1"/>
    <property type="molecule type" value="Genomic_DNA"/>
</dbReference>
<dbReference type="RefSeq" id="WP_010916345.1">
    <property type="nucleotide sequence ID" value="NC_002689.2"/>
</dbReference>
<dbReference type="SMR" id="Q97CL3"/>
<dbReference type="STRING" id="273116.gene:9380856"/>
<dbReference type="PaxDb" id="273116-14324302"/>
<dbReference type="GeneID" id="1441575"/>
<dbReference type="KEGG" id="tvo:TVG0090326"/>
<dbReference type="eggNOG" id="arCOG04541">
    <property type="taxonomic scope" value="Archaea"/>
</dbReference>
<dbReference type="HOGENOM" id="CLU_003601_3_3_2"/>
<dbReference type="OrthoDB" id="53075at2157"/>
<dbReference type="PhylomeDB" id="Q97CL3"/>
<dbReference type="UniPathway" id="UPA00193"/>
<dbReference type="Proteomes" id="UP000001017">
    <property type="component" value="Chromosome"/>
</dbReference>
<dbReference type="GO" id="GO:0005524">
    <property type="term" value="F:ATP binding"/>
    <property type="evidence" value="ECO:0007669"/>
    <property type="project" value="UniProtKB-UniRule"/>
</dbReference>
<dbReference type="GO" id="GO:0004329">
    <property type="term" value="F:formate-tetrahydrofolate ligase activity"/>
    <property type="evidence" value="ECO:0007669"/>
    <property type="project" value="UniProtKB-UniRule"/>
</dbReference>
<dbReference type="GO" id="GO:0035999">
    <property type="term" value="P:tetrahydrofolate interconversion"/>
    <property type="evidence" value="ECO:0007669"/>
    <property type="project" value="UniProtKB-UniRule"/>
</dbReference>
<dbReference type="Gene3D" id="3.30.1510.10">
    <property type="entry name" value="Domain 2, N(10)-formyltetrahydrofolate synthetase"/>
    <property type="match status" value="1"/>
</dbReference>
<dbReference type="Gene3D" id="3.10.410.10">
    <property type="entry name" value="Formyltetrahydrofolate synthetase, domain 3"/>
    <property type="match status" value="1"/>
</dbReference>
<dbReference type="Gene3D" id="3.40.50.300">
    <property type="entry name" value="P-loop containing nucleotide triphosphate hydrolases"/>
    <property type="match status" value="1"/>
</dbReference>
<dbReference type="HAMAP" id="MF_01543">
    <property type="entry name" value="FTHFS"/>
    <property type="match status" value="1"/>
</dbReference>
<dbReference type="InterPro" id="IPR000559">
    <property type="entry name" value="Formate_THF_ligase"/>
</dbReference>
<dbReference type="InterPro" id="IPR020628">
    <property type="entry name" value="Formate_THF_ligase_CS"/>
</dbReference>
<dbReference type="InterPro" id="IPR027417">
    <property type="entry name" value="P-loop_NTPase"/>
</dbReference>
<dbReference type="NCBIfam" id="NF010030">
    <property type="entry name" value="PRK13505.1"/>
    <property type="match status" value="1"/>
</dbReference>
<dbReference type="Pfam" id="PF01268">
    <property type="entry name" value="FTHFS"/>
    <property type="match status" value="1"/>
</dbReference>
<dbReference type="SUPFAM" id="SSF52540">
    <property type="entry name" value="P-loop containing nucleoside triphosphate hydrolases"/>
    <property type="match status" value="1"/>
</dbReference>
<dbReference type="PROSITE" id="PS00721">
    <property type="entry name" value="FTHFS_1"/>
    <property type="match status" value="1"/>
</dbReference>
<dbReference type="PROSITE" id="PS00722">
    <property type="entry name" value="FTHFS_2"/>
    <property type="match status" value="1"/>
</dbReference>
<gene>
    <name evidence="1" type="primary">fhs</name>
    <name type="ordered locus">TV0088</name>
    <name type="ORF">TVG0090326</name>
</gene>
<organism>
    <name type="scientific">Thermoplasma volcanium (strain ATCC 51530 / DSM 4299 / JCM 9571 / NBRC 15438 / GSS1)</name>
    <dbReference type="NCBI Taxonomy" id="273116"/>
    <lineage>
        <taxon>Archaea</taxon>
        <taxon>Methanobacteriati</taxon>
        <taxon>Thermoplasmatota</taxon>
        <taxon>Thermoplasmata</taxon>
        <taxon>Thermoplasmatales</taxon>
        <taxon>Thermoplasmataceae</taxon>
        <taxon>Thermoplasma</taxon>
    </lineage>
</organism>